<dbReference type="EMBL" id="M96343">
    <property type="protein sequence ID" value="AAA22398.1"/>
    <property type="molecule type" value="Genomic_DNA"/>
</dbReference>
<dbReference type="EMBL" id="M95582">
    <property type="protein sequence ID" value="AAA22606.1"/>
    <property type="molecule type" value="Genomic_DNA"/>
</dbReference>
<dbReference type="EMBL" id="AL009126">
    <property type="protein sequence ID" value="CAB14762.2"/>
    <property type="molecule type" value="Genomic_DNA"/>
</dbReference>
<dbReference type="PIR" id="C45240">
    <property type="entry name" value="C45240"/>
</dbReference>
<dbReference type="PIR" id="E69660">
    <property type="entry name" value="E69660"/>
</dbReference>
<dbReference type="RefSeq" id="NP_390680.2">
    <property type="nucleotide sequence ID" value="NC_000964.3"/>
</dbReference>
<dbReference type="RefSeq" id="WP_009967915.1">
    <property type="nucleotide sequence ID" value="NZ_OZ025638.1"/>
</dbReference>
<dbReference type="BMRB" id="Q01466"/>
<dbReference type="SMR" id="Q01466"/>
<dbReference type="FunCoup" id="Q01466">
    <property type="interactions" value="352"/>
</dbReference>
<dbReference type="IntAct" id="Q01466">
    <property type="interactions" value="10"/>
</dbReference>
<dbReference type="STRING" id="224308.BSU28020"/>
<dbReference type="TCDB" id="9.B.157.1.1">
    <property type="family name" value="the cell shape-determining mrebcd (mrebcd) family"/>
</dbReference>
<dbReference type="PaxDb" id="224308-BSU28020"/>
<dbReference type="EnsemblBacteria" id="CAB14762">
    <property type="protein sequence ID" value="CAB14762"/>
    <property type="gene ID" value="BSU_28020"/>
</dbReference>
<dbReference type="GeneID" id="937498"/>
<dbReference type="KEGG" id="bsu:BSU28020"/>
<dbReference type="PATRIC" id="fig|224308.179.peg.3044"/>
<dbReference type="eggNOG" id="COG1792">
    <property type="taxonomic scope" value="Bacteria"/>
</dbReference>
<dbReference type="InParanoid" id="Q01466"/>
<dbReference type="OrthoDB" id="9792313at2"/>
<dbReference type="PhylomeDB" id="Q01466"/>
<dbReference type="BioCyc" id="BSUB:BSU28020-MONOMER"/>
<dbReference type="Proteomes" id="UP000001570">
    <property type="component" value="Chromosome"/>
</dbReference>
<dbReference type="GO" id="GO:0030428">
    <property type="term" value="C:cell septum"/>
    <property type="evidence" value="ECO:0000314"/>
    <property type="project" value="UniProtKB"/>
</dbReference>
<dbReference type="GO" id="GO:0045121">
    <property type="term" value="C:membrane raft"/>
    <property type="evidence" value="ECO:0007669"/>
    <property type="project" value="UniProtKB-SubCell"/>
</dbReference>
<dbReference type="GO" id="GO:0005886">
    <property type="term" value="C:plasma membrane"/>
    <property type="evidence" value="ECO:0000314"/>
    <property type="project" value="UniProtKB"/>
</dbReference>
<dbReference type="GO" id="GO:0009273">
    <property type="term" value="P:peptidoglycan-based cell wall biogenesis"/>
    <property type="evidence" value="ECO:0000315"/>
    <property type="project" value="UniProtKB"/>
</dbReference>
<dbReference type="GO" id="GO:0008360">
    <property type="term" value="P:regulation of cell shape"/>
    <property type="evidence" value="ECO:0000315"/>
    <property type="project" value="UniProtKB"/>
</dbReference>
<dbReference type="Gene3D" id="2.40.10.340">
    <property type="entry name" value="Rod shape-determining protein MreC, domain 1"/>
    <property type="match status" value="1"/>
</dbReference>
<dbReference type="Gene3D" id="2.40.10.350">
    <property type="entry name" value="Rod shape-determining protein MreC, domain 2"/>
    <property type="match status" value="1"/>
</dbReference>
<dbReference type="Gene3D" id="1.20.5.490">
    <property type="entry name" value="Single helix bin"/>
    <property type="match status" value="1"/>
</dbReference>
<dbReference type="InterPro" id="IPR042177">
    <property type="entry name" value="Cell/Rod_1"/>
</dbReference>
<dbReference type="InterPro" id="IPR042175">
    <property type="entry name" value="Cell/Rod_MreC_2"/>
</dbReference>
<dbReference type="InterPro" id="IPR007221">
    <property type="entry name" value="MreC"/>
</dbReference>
<dbReference type="InterPro" id="IPR055342">
    <property type="entry name" value="MreC_beta-barrel_core"/>
</dbReference>
<dbReference type="NCBIfam" id="TIGR00219">
    <property type="entry name" value="mreC"/>
    <property type="match status" value="1"/>
</dbReference>
<dbReference type="PANTHER" id="PTHR34138">
    <property type="entry name" value="CELL SHAPE-DETERMINING PROTEIN MREC"/>
    <property type="match status" value="1"/>
</dbReference>
<dbReference type="PANTHER" id="PTHR34138:SF1">
    <property type="entry name" value="CELL SHAPE-DETERMINING PROTEIN MREC"/>
    <property type="match status" value="1"/>
</dbReference>
<dbReference type="Pfam" id="PF04085">
    <property type="entry name" value="MreC"/>
    <property type="match status" value="1"/>
</dbReference>
<dbReference type="PIRSF" id="PIRSF038471">
    <property type="entry name" value="MreC"/>
    <property type="match status" value="1"/>
</dbReference>
<sequence>MPNKRLMLLLLCIIILVAMIGFSLKGGRNTTWPEKVIGDTTGVFQNIFHTPAEFFAGIFENINDLKNTYKENERLREKLDGQTQYEAKLQELEEENKSLRDELGHVKSIKDYKPILATVIARSPDNWAKQVTINKGTQQNVAKDMAVTNEKGALIGKIKSSGLNNFTSAVQLLSDTDRNNRVATKISGKKGSKGYGLIEGYDKEKKRLKMTIIERKDKQDVKKGDLIETSGTGGVFPEGLTIGEVTDIESDSYGLTKVAYVKPAADLTDLNNVIVVNRDVPTVDTEEEGS</sequence>
<protein>
    <recommendedName>
        <fullName>Cell shape-determining protein MreC</fullName>
    </recommendedName>
    <alternativeName>
        <fullName>Cell shape protein MreC</fullName>
    </alternativeName>
    <alternativeName>
        <fullName>Rod shape-determining protein MreC</fullName>
    </alternativeName>
</protein>
<feature type="signal peptide" evidence="1">
    <location>
        <begin position="1"/>
        <end position="23"/>
    </location>
</feature>
<feature type="chain" id="PRO_0000062766" description="Cell shape-determining protein MreC">
    <location>
        <begin position="24"/>
        <end position="290"/>
    </location>
</feature>
<feature type="coiled-coil region" evidence="1">
    <location>
        <begin position="58"/>
        <end position="111"/>
    </location>
</feature>
<feature type="mutagenesis site" description="No effect on cell shape or cell viability." evidence="6">
    <original>TS</original>
    <variation>AA</variation>
    <location>
        <begin position="229"/>
        <end position="230"/>
    </location>
</feature>
<feature type="sequence conflict" description="In Ref. 2; AAA22398." evidence="8" ref="2">
    <original>K</original>
    <variation>F</variation>
    <location>
        <position position="143"/>
    </location>
</feature>
<feature type="sequence conflict" description="In Ref. 2; AAA22398." evidence="8" ref="2">
    <original>T</original>
    <variation>P</variation>
    <location>
        <position position="176"/>
    </location>
</feature>
<gene>
    <name type="primary">mreC</name>
    <name type="ordered locus">BSU28020</name>
</gene>
<comment type="function">
    <text evidence="4 5">Involved in formation and maintenance of cell shape. Required for the formation of proper helical filaments of MreB and for cell wall synthesis in the cylindrical part of the cell leading to cell elongation.</text>
</comment>
<comment type="subunit">
    <text evidence="6">Self-associates. Interacts with MreD and proteins that belong to class A and class B high-molecular-weight penicillin-binding proteins (PBP2b, PBP1, PBP2a, PBP3, PBP4, PBP2c, PBP2d, PBPH and PBP4b).</text>
</comment>
<comment type="subcellular location">
    <subcellularLocation>
        <location evidence="7">Cell membrane</location>
    </subcellularLocation>
    <subcellularLocation>
        <location>Cell septum</location>
    </subcellularLocation>
    <subcellularLocation>
        <location evidence="7">Membrane raft</location>
    </subcellularLocation>
    <text evidence="4 7">Localizes in helical patterns when associated with the cell membrane (PubMed:15745453). Present in detergent-resistant membrane (DRM) fractions that may be equivalent to eukaryotic membrane rafts; these rafts include proteins involved in signaling, molecule trafficking and protein secretion (PubMed:22882210).</text>
</comment>
<comment type="disruption phenotype">
    <text evidence="2 3 4 5">Loss of viability. Cells lacking sufficient quantities of this protein undergo morphological changes, namely, swelling and twisting of the cells followed by cell lysis. A polymeric material accumulates at one side of the division septum of the cells and the presence of this material correlates with the bending of the cell. After prolonged depletion in the presence of MgCl(2), the cells become very short and fat and eventually spheroidal, but no significant lysis is observed. Addition of sucrose results in rounded cells. Cells are still capable of making division septa. Null mutants show little or no sign of a defined long axis and have a severe shape defect.</text>
</comment>
<comment type="similarity">
    <text evidence="8">Belongs to the MreC family.</text>
</comment>
<evidence type="ECO:0000255" key="1"/>
<evidence type="ECO:0000269" key="2">
    <source>
    </source>
</evidence>
<evidence type="ECO:0000269" key="3">
    <source>
    </source>
</evidence>
<evidence type="ECO:0000269" key="4">
    <source>
    </source>
</evidence>
<evidence type="ECO:0000269" key="5">
    <source>
    </source>
</evidence>
<evidence type="ECO:0000269" key="6">
    <source>
    </source>
</evidence>
<evidence type="ECO:0000269" key="7">
    <source>
    </source>
</evidence>
<evidence type="ECO:0000305" key="8"/>
<name>MREC_BACSU</name>
<reference key="1">
    <citation type="journal article" date="1992" name="J. Bacteriol.">
        <title>Identification of Bacillus subtilis genes for septum placement and shape determination.</title>
        <authorList>
            <person name="Levin P.A."/>
            <person name="Margolis P.S."/>
            <person name="Setlow P."/>
            <person name="Losick R."/>
            <person name="Sun D."/>
        </authorList>
    </citation>
    <scope>NUCLEOTIDE SEQUENCE [GENOMIC DNA]</scope>
    <source>
        <strain>168 / PY79</strain>
    </source>
</reference>
<reference key="2">
    <citation type="journal article" date="1992" name="J. Bacteriol.">
        <title>The divIVB region of the Bacillus subtilis chromosome encodes homologs of Escherichia coli septum placement (minCD) and cell shape (mreBCD) determinants.</title>
        <authorList>
            <person name="Varley A.W."/>
            <person name="Stewart G.C."/>
        </authorList>
    </citation>
    <scope>NUCLEOTIDE SEQUENCE [GENOMIC DNA]</scope>
    <scope>DISRUPTION PHENOTYPE</scope>
    <source>
        <strain>168</strain>
    </source>
</reference>
<reference key="3">
    <citation type="journal article" date="1997" name="Nature">
        <title>The complete genome sequence of the Gram-positive bacterium Bacillus subtilis.</title>
        <authorList>
            <person name="Kunst F."/>
            <person name="Ogasawara N."/>
            <person name="Moszer I."/>
            <person name="Albertini A.M."/>
            <person name="Alloni G."/>
            <person name="Azevedo V."/>
            <person name="Bertero M.G."/>
            <person name="Bessieres P."/>
            <person name="Bolotin A."/>
            <person name="Borchert S."/>
            <person name="Borriss R."/>
            <person name="Boursier L."/>
            <person name="Brans A."/>
            <person name="Braun M."/>
            <person name="Brignell S.C."/>
            <person name="Bron S."/>
            <person name="Brouillet S."/>
            <person name="Bruschi C.V."/>
            <person name="Caldwell B."/>
            <person name="Capuano V."/>
            <person name="Carter N.M."/>
            <person name="Choi S.-K."/>
            <person name="Codani J.-J."/>
            <person name="Connerton I.F."/>
            <person name="Cummings N.J."/>
            <person name="Daniel R.A."/>
            <person name="Denizot F."/>
            <person name="Devine K.M."/>
            <person name="Duesterhoeft A."/>
            <person name="Ehrlich S.D."/>
            <person name="Emmerson P.T."/>
            <person name="Entian K.-D."/>
            <person name="Errington J."/>
            <person name="Fabret C."/>
            <person name="Ferrari E."/>
            <person name="Foulger D."/>
            <person name="Fritz C."/>
            <person name="Fujita M."/>
            <person name="Fujita Y."/>
            <person name="Fuma S."/>
            <person name="Galizzi A."/>
            <person name="Galleron N."/>
            <person name="Ghim S.-Y."/>
            <person name="Glaser P."/>
            <person name="Goffeau A."/>
            <person name="Golightly E.J."/>
            <person name="Grandi G."/>
            <person name="Guiseppi G."/>
            <person name="Guy B.J."/>
            <person name="Haga K."/>
            <person name="Haiech J."/>
            <person name="Harwood C.R."/>
            <person name="Henaut A."/>
            <person name="Hilbert H."/>
            <person name="Holsappel S."/>
            <person name="Hosono S."/>
            <person name="Hullo M.-F."/>
            <person name="Itaya M."/>
            <person name="Jones L.-M."/>
            <person name="Joris B."/>
            <person name="Karamata D."/>
            <person name="Kasahara Y."/>
            <person name="Klaerr-Blanchard M."/>
            <person name="Klein C."/>
            <person name="Kobayashi Y."/>
            <person name="Koetter P."/>
            <person name="Koningstein G."/>
            <person name="Krogh S."/>
            <person name="Kumano M."/>
            <person name="Kurita K."/>
            <person name="Lapidus A."/>
            <person name="Lardinois S."/>
            <person name="Lauber J."/>
            <person name="Lazarevic V."/>
            <person name="Lee S.-M."/>
            <person name="Levine A."/>
            <person name="Liu H."/>
            <person name="Masuda S."/>
            <person name="Mauel C."/>
            <person name="Medigue C."/>
            <person name="Medina N."/>
            <person name="Mellado R.P."/>
            <person name="Mizuno M."/>
            <person name="Moestl D."/>
            <person name="Nakai S."/>
            <person name="Noback M."/>
            <person name="Noone D."/>
            <person name="O'Reilly M."/>
            <person name="Ogawa K."/>
            <person name="Ogiwara A."/>
            <person name="Oudega B."/>
            <person name="Park S.-H."/>
            <person name="Parro V."/>
            <person name="Pohl T.M."/>
            <person name="Portetelle D."/>
            <person name="Porwollik S."/>
            <person name="Prescott A.M."/>
            <person name="Presecan E."/>
            <person name="Pujic P."/>
            <person name="Purnelle B."/>
            <person name="Rapoport G."/>
            <person name="Rey M."/>
            <person name="Reynolds S."/>
            <person name="Rieger M."/>
            <person name="Rivolta C."/>
            <person name="Rocha E."/>
            <person name="Roche B."/>
            <person name="Rose M."/>
            <person name="Sadaie Y."/>
            <person name="Sato T."/>
            <person name="Scanlan E."/>
            <person name="Schleich S."/>
            <person name="Schroeter R."/>
            <person name="Scoffone F."/>
            <person name="Sekiguchi J."/>
            <person name="Sekowska A."/>
            <person name="Seror S.J."/>
            <person name="Serror P."/>
            <person name="Shin B.-S."/>
            <person name="Soldo B."/>
            <person name="Sorokin A."/>
            <person name="Tacconi E."/>
            <person name="Takagi T."/>
            <person name="Takahashi H."/>
            <person name="Takemaru K."/>
            <person name="Takeuchi M."/>
            <person name="Tamakoshi A."/>
            <person name="Tanaka T."/>
            <person name="Terpstra P."/>
            <person name="Tognoni A."/>
            <person name="Tosato V."/>
            <person name="Uchiyama S."/>
            <person name="Vandenbol M."/>
            <person name="Vannier F."/>
            <person name="Vassarotti A."/>
            <person name="Viari A."/>
            <person name="Wambutt R."/>
            <person name="Wedler E."/>
            <person name="Wedler H."/>
            <person name="Weitzenegger T."/>
            <person name="Winters P."/>
            <person name="Wipat A."/>
            <person name="Yamamoto H."/>
            <person name="Yamane K."/>
            <person name="Yasumoto K."/>
            <person name="Yata K."/>
            <person name="Yoshida K."/>
            <person name="Yoshikawa H.-F."/>
            <person name="Zumstein E."/>
            <person name="Yoshikawa H."/>
            <person name="Danchin A."/>
        </authorList>
    </citation>
    <scope>NUCLEOTIDE SEQUENCE [LARGE SCALE GENOMIC DNA]</scope>
    <source>
        <strain>168</strain>
    </source>
</reference>
<reference key="4">
    <citation type="journal article" date="2009" name="Microbiology">
        <title>From a consortium sequence to a unified sequence: the Bacillus subtilis 168 reference genome a decade later.</title>
        <authorList>
            <person name="Barbe V."/>
            <person name="Cruveiller S."/>
            <person name="Kunst F."/>
            <person name="Lenoble P."/>
            <person name="Meurice G."/>
            <person name="Sekowska A."/>
            <person name="Vallenet D."/>
            <person name="Wang T."/>
            <person name="Moszer I."/>
            <person name="Medigue C."/>
            <person name="Danchin A."/>
        </authorList>
    </citation>
    <scope>SEQUENCE REVISION TO 143 AND 176</scope>
</reference>
<reference key="5">
    <citation type="journal article" date="2003" name="J. Bacteriol.">
        <title>Essential nature of the mreC determinant of Bacillus subtilis.</title>
        <authorList>
            <person name="Lee J.C."/>
            <person name="Stewart G.C."/>
        </authorList>
    </citation>
    <scope>DISRUPTION PHENOTYPE</scope>
    <source>
        <strain>168</strain>
    </source>
</reference>
<reference key="6">
    <citation type="journal article" date="2005" name="BMC Cell Biol.">
        <title>Bacillus subtilis actin-like protein MreB influences the positioning of the replication machinery and requires membrane proteins MreC/D and other actin-like proteins for proper localization.</title>
        <authorList>
            <person name="Defeu Soufo H.J."/>
            <person name="Graumann P.L."/>
        </authorList>
    </citation>
    <scope>FUNCTION</scope>
    <scope>SUBCELLULAR LOCATION</scope>
    <scope>DISRUPTION PHENOTYPE</scope>
    <source>
        <strain>168</strain>
    </source>
</reference>
<reference key="7">
    <citation type="journal article" date="2005" name="Mol. Microbiol.">
        <title>Roles for MreC and MreD proteins in helical growth of the cylindrical cell wall in Bacillus subtilis.</title>
        <authorList>
            <person name="Leaver M."/>
            <person name="Errington J."/>
        </authorList>
    </citation>
    <scope>FUNCTION</scope>
    <scope>SUBCELLULAR LOCATION</scope>
    <scope>DISRUPTION PHENOTYPE</scope>
    <source>
        <strain>168</strain>
    </source>
</reference>
<reference key="8">
    <citation type="journal article" date="2006" name="Mol. Microbiol.">
        <title>Dimeric structure of the cell shape protein MreC and its functional implications.</title>
        <authorList>
            <person name="van den Ent F."/>
            <person name="Leaver M."/>
            <person name="Bendezu F."/>
            <person name="Errington J."/>
            <person name="de Boer P."/>
            <person name="Lowe J."/>
        </authorList>
    </citation>
    <scope>SELF-ASSOCIATION</scope>
    <scope>INTERACTION WITH MRED AND PENICILLIN-BINDING PROTEINS</scope>
    <scope>MUTAGENESIS OF 229-THR-SER-230</scope>
</reference>
<reference key="9">
    <citation type="journal article" date="2012" name="Mol. Microbiol.">
        <title>The biofilm formation defect of a Bacillus subtilis flotillin-defective mutant involves the protease FtsH.</title>
        <authorList>
            <person name="Yepes A."/>
            <person name="Schneider J."/>
            <person name="Mielich B."/>
            <person name="Koch G."/>
            <person name="Garcia-Betancur J.C."/>
            <person name="Ramamurthi K.S."/>
            <person name="Vlamakis H."/>
            <person name="Lopez D."/>
        </authorList>
    </citation>
    <scope>SUBCELLULAR LOCATION</scope>
    <source>
        <strain>168 / Marburg / ATCC 6051 / DSM 10 / JCM 1465 / NBRC 13719 / NCIMB 3610 / NRRL NRS-744 / VKM B-501</strain>
    </source>
</reference>
<reference key="10">
    <citation type="journal article" date="2010" name="Biomol. NMR. Assign.">
        <title>1H, 13C and 15N resonance assignments of the major extracytoplasmic domain of the cell shape-determining protein MreC from Bacillus subtilis.</title>
        <authorList>
            <person name="Kyburz A."/>
            <person name="Raulinaitis V."/>
            <person name="Koskela O."/>
            <person name="Kontinen V."/>
            <person name="Permi P."/>
            <person name="Kilpelainen I."/>
            <person name="Seppala R."/>
        </authorList>
    </citation>
    <scope>NMR SPECTROSCOPY OF 104-279</scope>
</reference>
<organism>
    <name type="scientific">Bacillus subtilis (strain 168)</name>
    <dbReference type="NCBI Taxonomy" id="224308"/>
    <lineage>
        <taxon>Bacteria</taxon>
        <taxon>Bacillati</taxon>
        <taxon>Bacillota</taxon>
        <taxon>Bacilli</taxon>
        <taxon>Bacillales</taxon>
        <taxon>Bacillaceae</taxon>
        <taxon>Bacillus</taxon>
    </lineage>
</organism>
<proteinExistence type="evidence at protein level"/>
<keyword id="KW-1003">Cell membrane</keyword>
<keyword id="KW-0133">Cell shape</keyword>
<keyword id="KW-0175">Coiled coil</keyword>
<keyword id="KW-0472">Membrane</keyword>
<keyword id="KW-1185">Reference proteome</keyword>
<keyword id="KW-0732">Signal</keyword>
<accession>Q01466</accession>